<keyword id="KW-1185">Reference proteome</keyword>
<sequence length="313" mass="36034">MKCKWACLRLRDAFYKGHVLVLAEYADLKYLGFQKYEYFEYVLLQLNGSAQFCGAMATNPRYCLQVFSAADDMCSVRHHVKTAFKTPVLGHVCVLQHKPAMYACLKEWYTLFEFQVPLLRSQSLVWEFPHVVVFDLDSTLITEQEDVQIRDPQIYDDLSELRDLGCVLVLWSYGSRDHVAHSLRAVQLTPYFDAIISEGSVAEDAPAATTETTDLQMQSRYVSSNFSFDMHAESGAELPKSPKVVIKILADKGVNYFKSITLVDDLPSNNFAYDYYVRVKRCPVPLRDWRRYQDEILDNLAEYDSLYVSNKTI</sequence>
<proteinExistence type="predicted"/>
<organism>
    <name type="scientific">Orgyia pseudotsugata multicapsid polyhedrosis virus</name>
    <name type="common">OpMNPV</name>
    <dbReference type="NCBI Taxonomy" id="262177"/>
    <lineage>
        <taxon>Viruses</taxon>
        <taxon>Viruses incertae sedis</taxon>
        <taxon>Naldaviricetes</taxon>
        <taxon>Lefavirales</taxon>
        <taxon>Baculoviridae</taxon>
        <taxon>Alphabaculovirus</taxon>
        <taxon>Alphabaculovirus orpseudotsugatae</taxon>
    </lineage>
</organism>
<feature type="chain" id="PRO_0000133032" description="Uncharacterized 36.0 kDa protein">
    <location>
        <begin position="1"/>
        <end position="313"/>
    </location>
</feature>
<name>Y098_NPVOP</name>
<protein>
    <recommendedName>
        <fullName>Uncharacterized 36.0 kDa protein</fullName>
    </recommendedName>
</protein>
<dbReference type="EMBL" id="U75930">
    <property type="protein sequence ID" value="AAC59098.1"/>
    <property type="molecule type" value="Genomic_DNA"/>
</dbReference>
<dbReference type="RefSeq" id="NP_046255.1">
    <property type="nucleotide sequence ID" value="NC_001875.2"/>
</dbReference>
<dbReference type="SMR" id="O10343"/>
<dbReference type="KEGG" id="vg:911989"/>
<dbReference type="OrthoDB" id="4999at10239"/>
<dbReference type="Proteomes" id="UP000009248">
    <property type="component" value="Genome"/>
</dbReference>
<dbReference type="CDD" id="cd01427">
    <property type="entry name" value="HAD_like"/>
    <property type="match status" value="1"/>
</dbReference>
<dbReference type="Gene3D" id="3.40.50.1000">
    <property type="entry name" value="HAD superfamily/HAD-like"/>
    <property type="match status" value="1"/>
</dbReference>
<dbReference type="InterPro" id="IPR007827">
    <property type="entry name" value="DUF705"/>
</dbReference>
<dbReference type="InterPro" id="IPR036412">
    <property type="entry name" value="HAD-like_sf"/>
</dbReference>
<dbReference type="InterPro" id="IPR023214">
    <property type="entry name" value="HAD_sf"/>
</dbReference>
<dbReference type="InterPro" id="IPR010033">
    <property type="entry name" value="HAD_SF_ppase_IIIC"/>
</dbReference>
<dbReference type="NCBIfam" id="TIGR01681">
    <property type="entry name" value="HAD-SF-IIIC"/>
    <property type="match status" value="1"/>
</dbReference>
<dbReference type="NCBIfam" id="TIGR01684">
    <property type="entry name" value="viral_ppase"/>
    <property type="match status" value="1"/>
</dbReference>
<dbReference type="Pfam" id="PF05152">
    <property type="entry name" value="DUF705"/>
    <property type="match status" value="1"/>
</dbReference>
<dbReference type="SUPFAM" id="SSF56784">
    <property type="entry name" value="HAD-like"/>
    <property type="match status" value="1"/>
</dbReference>
<reference key="1">
    <citation type="journal article" date="1997" name="Virology">
        <title>The sequence of the Orgyia pseudotsugata multinucleocapsid nuclear polyhedrosis virus genome.</title>
        <authorList>
            <person name="Ahrens C.H."/>
            <person name="Russell R.R."/>
            <person name="Funk C.J."/>
            <person name="Evans J."/>
            <person name="Harwood S."/>
            <person name="Rohrmann G.F."/>
        </authorList>
    </citation>
    <scope>NUCLEOTIDE SEQUENCE [LARGE SCALE GENOMIC DNA]</scope>
</reference>
<organismHost>
    <name type="scientific">Orgyia pseudotsugata</name>
    <name type="common">Douglas-fir tussock moth</name>
    <dbReference type="NCBI Taxonomy" id="33414"/>
</organismHost>
<accession>O10343</accession>
<gene>
    <name type="ORF">ORF99</name>
</gene>